<name>PAQR9_MOUSE</name>
<reference key="1">
    <citation type="journal article" date="2005" name="J. Mol. Evol.">
        <title>PAQR proteins: a novel membrane receptor family defined by an ancient 7-transmembrane pass motif.</title>
        <authorList>
            <person name="Tang Y.T."/>
            <person name="Hu T."/>
            <person name="Arterburn M."/>
            <person name="Boyle B."/>
            <person name="Bright J.M."/>
            <person name="Emtage P.C."/>
            <person name="Funk W.D."/>
        </authorList>
    </citation>
    <scope>NUCLEOTIDE SEQUENCE [MRNA]</scope>
    <source>
        <strain>C57BL/6J</strain>
    </source>
</reference>
<reference key="2">
    <citation type="journal article" date="2005" name="Science">
        <title>The transcriptional landscape of the mammalian genome.</title>
        <authorList>
            <person name="Carninci P."/>
            <person name="Kasukawa T."/>
            <person name="Katayama S."/>
            <person name="Gough J."/>
            <person name="Frith M.C."/>
            <person name="Maeda N."/>
            <person name="Oyama R."/>
            <person name="Ravasi T."/>
            <person name="Lenhard B."/>
            <person name="Wells C."/>
            <person name="Kodzius R."/>
            <person name="Shimokawa K."/>
            <person name="Bajic V.B."/>
            <person name="Brenner S.E."/>
            <person name="Batalov S."/>
            <person name="Forrest A.R."/>
            <person name="Zavolan M."/>
            <person name="Davis M.J."/>
            <person name="Wilming L.G."/>
            <person name="Aidinis V."/>
            <person name="Allen J.E."/>
            <person name="Ambesi-Impiombato A."/>
            <person name="Apweiler R."/>
            <person name="Aturaliya R.N."/>
            <person name="Bailey T.L."/>
            <person name="Bansal M."/>
            <person name="Baxter L."/>
            <person name="Beisel K.W."/>
            <person name="Bersano T."/>
            <person name="Bono H."/>
            <person name="Chalk A.M."/>
            <person name="Chiu K.P."/>
            <person name="Choudhary V."/>
            <person name="Christoffels A."/>
            <person name="Clutterbuck D.R."/>
            <person name="Crowe M.L."/>
            <person name="Dalla E."/>
            <person name="Dalrymple B.P."/>
            <person name="de Bono B."/>
            <person name="Della Gatta G."/>
            <person name="di Bernardo D."/>
            <person name="Down T."/>
            <person name="Engstrom P."/>
            <person name="Fagiolini M."/>
            <person name="Faulkner G."/>
            <person name="Fletcher C.F."/>
            <person name="Fukushima T."/>
            <person name="Furuno M."/>
            <person name="Futaki S."/>
            <person name="Gariboldi M."/>
            <person name="Georgii-Hemming P."/>
            <person name="Gingeras T.R."/>
            <person name="Gojobori T."/>
            <person name="Green R.E."/>
            <person name="Gustincich S."/>
            <person name="Harbers M."/>
            <person name="Hayashi Y."/>
            <person name="Hensch T.K."/>
            <person name="Hirokawa N."/>
            <person name="Hill D."/>
            <person name="Huminiecki L."/>
            <person name="Iacono M."/>
            <person name="Ikeo K."/>
            <person name="Iwama A."/>
            <person name="Ishikawa T."/>
            <person name="Jakt M."/>
            <person name="Kanapin A."/>
            <person name="Katoh M."/>
            <person name="Kawasawa Y."/>
            <person name="Kelso J."/>
            <person name="Kitamura H."/>
            <person name="Kitano H."/>
            <person name="Kollias G."/>
            <person name="Krishnan S.P."/>
            <person name="Kruger A."/>
            <person name="Kummerfeld S.K."/>
            <person name="Kurochkin I.V."/>
            <person name="Lareau L.F."/>
            <person name="Lazarevic D."/>
            <person name="Lipovich L."/>
            <person name="Liu J."/>
            <person name="Liuni S."/>
            <person name="McWilliam S."/>
            <person name="Madan Babu M."/>
            <person name="Madera M."/>
            <person name="Marchionni L."/>
            <person name="Matsuda H."/>
            <person name="Matsuzawa S."/>
            <person name="Miki H."/>
            <person name="Mignone F."/>
            <person name="Miyake S."/>
            <person name="Morris K."/>
            <person name="Mottagui-Tabar S."/>
            <person name="Mulder N."/>
            <person name="Nakano N."/>
            <person name="Nakauchi H."/>
            <person name="Ng P."/>
            <person name="Nilsson R."/>
            <person name="Nishiguchi S."/>
            <person name="Nishikawa S."/>
            <person name="Nori F."/>
            <person name="Ohara O."/>
            <person name="Okazaki Y."/>
            <person name="Orlando V."/>
            <person name="Pang K.C."/>
            <person name="Pavan W.J."/>
            <person name="Pavesi G."/>
            <person name="Pesole G."/>
            <person name="Petrovsky N."/>
            <person name="Piazza S."/>
            <person name="Reed J."/>
            <person name="Reid J.F."/>
            <person name="Ring B.Z."/>
            <person name="Ringwald M."/>
            <person name="Rost B."/>
            <person name="Ruan Y."/>
            <person name="Salzberg S.L."/>
            <person name="Sandelin A."/>
            <person name="Schneider C."/>
            <person name="Schoenbach C."/>
            <person name="Sekiguchi K."/>
            <person name="Semple C.A."/>
            <person name="Seno S."/>
            <person name="Sessa L."/>
            <person name="Sheng Y."/>
            <person name="Shibata Y."/>
            <person name="Shimada H."/>
            <person name="Shimada K."/>
            <person name="Silva D."/>
            <person name="Sinclair B."/>
            <person name="Sperling S."/>
            <person name="Stupka E."/>
            <person name="Sugiura K."/>
            <person name="Sultana R."/>
            <person name="Takenaka Y."/>
            <person name="Taki K."/>
            <person name="Tammoja K."/>
            <person name="Tan S.L."/>
            <person name="Tang S."/>
            <person name="Taylor M.S."/>
            <person name="Tegner J."/>
            <person name="Teichmann S.A."/>
            <person name="Ueda H.R."/>
            <person name="van Nimwegen E."/>
            <person name="Verardo R."/>
            <person name="Wei C.L."/>
            <person name="Yagi K."/>
            <person name="Yamanishi H."/>
            <person name="Zabarovsky E."/>
            <person name="Zhu S."/>
            <person name="Zimmer A."/>
            <person name="Hide W."/>
            <person name="Bult C."/>
            <person name="Grimmond S.M."/>
            <person name="Teasdale R.D."/>
            <person name="Liu E.T."/>
            <person name="Brusic V."/>
            <person name="Quackenbush J."/>
            <person name="Wahlestedt C."/>
            <person name="Mattick J.S."/>
            <person name="Hume D.A."/>
            <person name="Kai C."/>
            <person name="Sasaki D."/>
            <person name="Tomaru Y."/>
            <person name="Fukuda S."/>
            <person name="Kanamori-Katayama M."/>
            <person name="Suzuki M."/>
            <person name="Aoki J."/>
            <person name="Arakawa T."/>
            <person name="Iida J."/>
            <person name="Imamura K."/>
            <person name="Itoh M."/>
            <person name="Kato T."/>
            <person name="Kawaji H."/>
            <person name="Kawagashira N."/>
            <person name="Kawashima T."/>
            <person name="Kojima M."/>
            <person name="Kondo S."/>
            <person name="Konno H."/>
            <person name="Nakano K."/>
            <person name="Ninomiya N."/>
            <person name="Nishio T."/>
            <person name="Okada M."/>
            <person name="Plessy C."/>
            <person name="Shibata K."/>
            <person name="Shiraki T."/>
            <person name="Suzuki S."/>
            <person name="Tagami M."/>
            <person name="Waki K."/>
            <person name="Watahiki A."/>
            <person name="Okamura-Oho Y."/>
            <person name="Suzuki H."/>
            <person name="Kawai J."/>
            <person name="Hayashizaki Y."/>
        </authorList>
    </citation>
    <scope>NUCLEOTIDE SEQUENCE [LARGE SCALE MRNA]</scope>
    <source>
        <strain>C57BL/6J</strain>
        <tissue>Testis</tissue>
    </source>
</reference>
<reference key="3">
    <citation type="journal article" date="2010" name="Cell">
        <title>A tissue-specific atlas of mouse protein phosphorylation and expression.</title>
        <authorList>
            <person name="Huttlin E.L."/>
            <person name="Jedrychowski M.P."/>
            <person name="Elias J.E."/>
            <person name="Goswami T."/>
            <person name="Rad R."/>
            <person name="Beausoleil S.A."/>
            <person name="Villen J."/>
            <person name="Haas W."/>
            <person name="Sowa M.E."/>
            <person name="Gygi S.P."/>
        </authorList>
    </citation>
    <scope>IDENTIFICATION BY MASS SPECTROMETRY [LARGE SCALE ANALYSIS]</scope>
    <source>
        <tissue>Liver</tissue>
        <tissue>Spleen</tissue>
    </source>
</reference>
<protein>
    <recommendedName>
        <fullName evidence="1">Membrane progesterone receptor epsilon</fullName>
        <shortName evidence="1">mPR epsilon</shortName>
    </recommendedName>
    <alternativeName>
        <fullName evidence="1">Membrane progesterone P4 receptor epsilon</fullName>
    </alternativeName>
    <alternativeName>
        <fullName evidence="1">Membrane progestin receptor epsilon</fullName>
    </alternativeName>
    <alternativeName>
        <fullName>Progesterone and adipoQ receptor family member 9</fullName>
    </alternativeName>
    <alternativeName>
        <fullName evidence="1">Progestin and adipoQ receptor family member 9</fullName>
    </alternativeName>
    <alternativeName>
        <fullName>Progestin and adipoQ receptor family member IX</fullName>
    </alternativeName>
</protein>
<dbReference type="EMBL" id="AY424298">
    <property type="protein sequence ID" value="AAR08386.1"/>
    <property type="molecule type" value="mRNA"/>
</dbReference>
<dbReference type="EMBL" id="AK133021">
    <property type="protein sequence ID" value="BAE21473.1"/>
    <property type="molecule type" value="mRNA"/>
</dbReference>
<dbReference type="CCDS" id="CCDS23409.1"/>
<dbReference type="RefSeq" id="NP_940806.2">
    <property type="nucleotide sequence ID" value="NM_198414.3"/>
</dbReference>
<dbReference type="SMR" id="Q6TCG2"/>
<dbReference type="FunCoup" id="Q6TCG2">
    <property type="interactions" value="393"/>
</dbReference>
<dbReference type="STRING" id="10090.ENSMUSP00000078547"/>
<dbReference type="iPTMnet" id="Q6TCG2"/>
<dbReference type="PhosphoSitePlus" id="Q6TCG2"/>
<dbReference type="SwissPalm" id="Q6TCG2"/>
<dbReference type="jPOST" id="Q6TCG2"/>
<dbReference type="PaxDb" id="10090-ENSMUSP00000078547"/>
<dbReference type="ProteomicsDB" id="294381"/>
<dbReference type="Antibodypedia" id="57880">
    <property type="antibodies" value="8 antibodies from 7 providers"/>
</dbReference>
<dbReference type="DNASU" id="75552"/>
<dbReference type="Ensembl" id="ENSMUST00000079597.7">
    <property type="protein sequence ID" value="ENSMUSP00000078547.6"/>
    <property type="gene ID" value="ENSMUSG00000064225.7"/>
</dbReference>
<dbReference type="GeneID" id="75552"/>
<dbReference type="KEGG" id="mmu:75552"/>
<dbReference type="UCSC" id="uc009rbf.1">
    <property type="organism name" value="mouse"/>
</dbReference>
<dbReference type="AGR" id="MGI:1922802"/>
<dbReference type="CTD" id="344838"/>
<dbReference type="MGI" id="MGI:1922802">
    <property type="gene designation" value="Paqr9"/>
</dbReference>
<dbReference type="VEuPathDB" id="HostDB:ENSMUSG00000064225"/>
<dbReference type="eggNOG" id="KOG0748">
    <property type="taxonomic scope" value="Eukaryota"/>
</dbReference>
<dbReference type="GeneTree" id="ENSGT00940000162334"/>
<dbReference type="HOGENOM" id="CLU_052356_1_0_1"/>
<dbReference type="InParanoid" id="Q6TCG2"/>
<dbReference type="OMA" id="RSEWCAY"/>
<dbReference type="OrthoDB" id="529367at2759"/>
<dbReference type="PhylomeDB" id="Q6TCG2"/>
<dbReference type="TreeFam" id="TF319738"/>
<dbReference type="BioGRID-ORCS" id="75552">
    <property type="hits" value="1 hit in 80 CRISPR screens"/>
</dbReference>
<dbReference type="PRO" id="PR:Q6TCG2"/>
<dbReference type="Proteomes" id="UP000000589">
    <property type="component" value="Chromosome 9"/>
</dbReference>
<dbReference type="RNAct" id="Q6TCG2">
    <property type="molecule type" value="protein"/>
</dbReference>
<dbReference type="Bgee" id="ENSMUSG00000064225">
    <property type="expression patterns" value="Expressed in left lobe of liver and 156 other cell types or tissues"/>
</dbReference>
<dbReference type="GO" id="GO:0005886">
    <property type="term" value="C:plasma membrane"/>
    <property type="evidence" value="ECO:0007669"/>
    <property type="project" value="UniProtKB-SubCell"/>
</dbReference>
<dbReference type="GO" id="GO:0005496">
    <property type="term" value="F:steroid binding"/>
    <property type="evidence" value="ECO:0007669"/>
    <property type="project" value="UniProtKB-KW"/>
</dbReference>
<dbReference type="InterPro" id="IPR004254">
    <property type="entry name" value="AdipoR/HlyIII-related"/>
</dbReference>
<dbReference type="PANTHER" id="PTHR20855">
    <property type="entry name" value="ADIPOR/PROGESTIN RECEPTOR-RELATED"/>
    <property type="match status" value="1"/>
</dbReference>
<dbReference type="PANTHER" id="PTHR20855:SF143">
    <property type="entry name" value="MEMBRANE PROGESTIN RECEPTOR EPSILON"/>
    <property type="match status" value="1"/>
</dbReference>
<dbReference type="Pfam" id="PF03006">
    <property type="entry name" value="HlyIII"/>
    <property type="match status" value="1"/>
</dbReference>
<organism>
    <name type="scientific">Mus musculus</name>
    <name type="common">Mouse</name>
    <dbReference type="NCBI Taxonomy" id="10090"/>
    <lineage>
        <taxon>Eukaryota</taxon>
        <taxon>Metazoa</taxon>
        <taxon>Chordata</taxon>
        <taxon>Craniata</taxon>
        <taxon>Vertebrata</taxon>
        <taxon>Euteleostomi</taxon>
        <taxon>Mammalia</taxon>
        <taxon>Eutheria</taxon>
        <taxon>Euarchontoglires</taxon>
        <taxon>Glires</taxon>
        <taxon>Rodentia</taxon>
        <taxon>Myomorpha</taxon>
        <taxon>Muroidea</taxon>
        <taxon>Muridae</taxon>
        <taxon>Murinae</taxon>
        <taxon>Mus</taxon>
        <taxon>Mus</taxon>
    </lineage>
</organism>
<gene>
    <name evidence="5" type="primary">Paqr9</name>
</gene>
<feature type="chain" id="PRO_0000218853" description="Membrane progesterone receptor epsilon">
    <location>
        <begin position="1"/>
        <end position="375"/>
    </location>
</feature>
<feature type="topological domain" description="Cytoplasmic" evidence="2">
    <location>
        <begin position="1"/>
        <end position="84"/>
    </location>
</feature>
<feature type="transmembrane region" description="Helical" evidence="2">
    <location>
        <begin position="85"/>
        <end position="105"/>
    </location>
</feature>
<feature type="topological domain" description="Extracellular" evidence="2">
    <location>
        <begin position="106"/>
        <end position="114"/>
    </location>
</feature>
<feature type="transmembrane region" description="Helical" evidence="2">
    <location>
        <begin position="115"/>
        <end position="135"/>
    </location>
</feature>
<feature type="topological domain" description="Cytoplasmic" evidence="2">
    <location>
        <begin position="136"/>
        <end position="160"/>
    </location>
</feature>
<feature type="transmembrane region" description="Helical" evidence="2">
    <location>
        <begin position="161"/>
        <end position="181"/>
    </location>
</feature>
<feature type="topological domain" description="Extracellular" evidence="2">
    <location>
        <begin position="182"/>
        <end position="203"/>
    </location>
</feature>
<feature type="transmembrane region" description="Helical" evidence="2">
    <location>
        <begin position="204"/>
        <end position="224"/>
    </location>
</feature>
<feature type="topological domain" description="Cytoplasmic" evidence="2">
    <location>
        <begin position="225"/>
        <end position="241"/>
    </location>
</feature>
<feature type="transmembrane region" description="Helical" evidence="2">
    <location>
        <begin position="242"/>
        <end position="262"/>
    </location>
</feature>
<feature type="topological domain" description="Extracellular" evidence="2">
    <location>
        <begin position="263"/>
        <end position="299"/>
    </location>
</feature>
<feature type="transmembrane region" description="Helical" evidence="2">
    <location>
        <begin position="300"/>
        <end position="320"/>
    </location>
</feature>
<feature type="topological domain" description="Cytoplasmic" evidence="2">
    <location>
        <begin position="321"/>
        <end position="341"/>
    </location>
</feature>
<feature type="transmembrane region" description="Helical" evidence="2">
    <location>
        <begin position="342"/>
        <end position="362"/>
    </location>
</feature>
<feature type="topological domain" description="Extracellular" evidence="2">
    <location>
        <begin position="363"/>
        <end position="375"/>
    </location>
</feature>
<feature type="region of interest" description="Disordered" evidence="3">
    <location>
        <begin position="1"/>
        <end position="39"/>
    </location>
</feature>
<feature type="compositionally biased region" description="Low complexity" evidence="3">
    <location>
        <begin position="15"/>
        <end position="39"/>
    </location>
</feature>
<feature type="sequence conflict" description="In Ref. 1; AAR08386." evidence="4" ref="1">
    <original>P</original>
    <variation>S</variation>
    <location>
        <position position="35"/>
    </location>
</feature>
<keyword id="KW-1003">Cell membrane</keyword>
<keyword id="KW-0446">Lipid-binding</keyword>
<keyword id="KW-0472">Membrane</keyword>
<keyword id="KW-0675">Receptor</keyword>
<keyword id="KW-1185">Reference proteome</keyword>
<keyword id="KW-0754">Steroid-binding</keyword>
<keyword id="KW-0812">Transmembrane</keyword>
<keyword id="KW-1133">Transmembrane helix</keyword>
<comment type="function">
    <text evidence="1">Plasma membrane progesterone (P4) receptor coupled to G proteins. Seems to act through a G(s) mediated pathway. May be involved in regulating rapid P4 signaling in the nervous system. Also binds dehydroepiandrosterone (DHEA), pregnanolone, pregnenolone and allopregnanolone.</text>
</comment>
<comment type="subunit">
    <text evidence="1">Homodimer.</text>
</comment>
<comment type="subcellular location">
    <subcellularLocation>
        <location evidence="1">Cell membrane</location>
        <topology evidence="2">Multi-pass membrane protein</topology>
    </subcellularLocation>
</comment>
<comment type="miscellaneous">
    <text evidence="1">Non-classical progesterone receptors involved in extranuclear signaling are classified in 2 groups: the class II progestin and adipoQ receptor (PAQR) family (also called mPRs) (PAQR5, PAQR6, PAQR7, PAQR8 and PAQR9) and the b5-like heme/steroid-binding protein family (also called MAPRs) (PGRMC1, PGRMC2, NENF and CYB5D2).</text>
</comment>
<comment type="similarity">
    <text evidence="4">Belongs to the ADIPOR family.</text>
</comment>
<sequence length="375" mass="42741">MPRRLQQRGAGVKGPPASTSRRSHPASASAPRSPPAATTKPLLRWDEVPDDFVECFILSGYRRLPCTAQECLASVLKPTNETLNFWTHFIPLLLFLSKFCRLFFLGGSDVPFHHPWLLPLWCYASGVLLTFAMSCTAHVFSCLSLRLRAAFFYLDYASISYYGFGSTVAYYYYLLPSLSLLDARVMTPYVQQRLGWHVDCTRLIAVYRALVLPVAFVLAVACTVACCKSRTDWCSYPFALRTFVFVMPLSMACPIMLESWLFDLRGENPTLFVHFYRRYFWLVVAAFFNVSKIPERIQPGLFDIIGHSHQLFHIFTFLSIYDQVYYVEEGLRQFLQAPPAAPTFSGTVGYMLLLVVCLGLVIRKFLNSTEFCSKK</sequence>
<evidence type="ECO:0000250" key="1">
    <source>
        <dbReference type="UniProtKB" id="Q6ZVX9"/>
    </source>
</evidence>
<evidence type="ECO:0000255" key="2"/>
<evidence type="ECO:0000256" key="3">
    <source>
        <dbReference type="SAM" id="MobiDB-lite"/>
    </source>
</evidence>
<evidence type="ECO:0000305" key="4"/>
<evidence type="ECO:0000312" key="5">
    <source>
        <dbReference type="MGI" id="MGI:1922802"/>
    </source>
</evidence>
<accession>Q6TCG2</accession>
<accession>Q3V0N1</accession>
<proteinExistence type="evidence at protein level"/>